<evidence type="ECO:0000250" key="1">
    <source>
        <dbReference type="UniProtKB" id="Q9D236"/>
    </source>
</evidence>
<evidence type="ECO:0000255" key="2"/>
<evidence type="ECO:0000255" key="3">
    <source>
        <dbReference type="PROSITE-ProRule" id="PRU00143"/>
    </source>
</evidence>
<evidence type="ECO:0000255" key="4">
    <source>
        <dbReference type="PROSITE-ProRule" id="PRU00653"/>
    </source>
</evidence>
<evidence type="ECO:0000255" key="5">
    <source>
        <dbReference type="PROSITE-ProRule" id="PRU00798"/>
    </source>
</evidence>
<evidence type="ECO:0000269" key="6">
    <source>
    </source>
</evidence>
<evidence type="ECO:0000269" key="7">
    <source>
    </source>
</evidence>
<evidence type="ECO:0000269" key="8">
    <source>
    </source>
</evidence>
<evidence type="ECO:0000269" key="9">
    <source>
    </source>
</evidence>
<evidence type="ECO:0000269" key="10">
    <source>
    </source>
</evidence>
<evidence type="ECO:0000269" key="11">
    <source>
    </source>
</evidence>
<evidence type="ECO:0000269" key="12">
    <source>
    </source>
</evidence>
<evidence type="ECO:0000303" key="13">
    <source>
    </source>
</evidence>
<evidence type="ECO:0000305" key="14"/>
<evidence type="ECO:0007829" key="15">
    <source>
        <dbReference type="PDB" id="2P3W"/>
    </source>
</evidence>
<evidence type="ECO:0007829" key="16">
    <source>
        <dbReference type="PDB" id="4RI0"/>
    </source>
</evidence>
<proteinExistence type="evidence at protein level"/>
<reference key="1">
    <citation type="journal article" date="2003" name="Biochem. J.">
        <title>Identification and cloning of two isoforms of human high-temperature requirement factor A3 (HtrA3), characterization of its genomic structure and comparison of its tissue distribution with HtrA1 and HtrA2.</title>
        <authorList>
            <person name="Nie G.-Y."/>
            <person name="Hampton A."/>
            <person name="Li Y."/>
            <person name="Findlay J.K."/>
            <person name="Salamonsen L.A."/>
        </authorList>
    </citation>
    <scope>NUCLEOTIDE SEQUENCE [MRNA] (ISOFORMS 1 AND 2)</scope>
    <scope>TISSUE SPECIFICITY</scope>
    <source>
        <tissue>Heart</tissue>
    </source>
</reference>
<reference key="2">
    <citation type="submission" date="2002-06" db="EMBL/GenBank/DDBJ databases">
        <authorList>
            <person name="Southan C."/>
            <person name="Punia P.K."/>
        </authorList>
    </citation>
    <scope>NUCLEOTIDE SEQUENCE [MRNA] (ISOFORM 1)</scope>
</reference>
<reference key="3">
    <citation type="journal article" date="2004" name="Genome Res.">
        <title>The status, quality, and expansion of the NIH full-length cDNA project: the Mammalian Gene Collection (MGC).</title>
        <authorList>
            <consortium name="The MGC Project Team"/>
        </authorList>
    </citation>
    <scope>NUCLEOTIDE SEQUENCE [LARGE SCALE MRNA] (ISOFORM 1)</scope>
    <source>
        <tissue>Brain</tissue>
        <tissue>Ovary</tissue>
    </source>
</reference>
<reference key="4">
    <citation type="journal article" date="2005" name="Nature">
        <title>Generation and annotation of the DNA sequences of human chromosomes 2 and 4.</title>
        <authorList>
            <person name="Hillier L.W."/>
            <person name="Graves T.A."/>
            <person name="Fulton R.S."/>
            <person name="Fulton L.A."/>
            <person name="Pepin K.H."/>
            <person name="Minx P."/>
            <person name="Wagner-McPherson C."/>
            <person name="Layman D."/>
            <person name="Wylie K."/>
            <person name="Sekhon M."/>
            <person name="Becker M.C."/>
            <person name="Fewell G.A."/>
            <person name="Delehaunty K.D."/>
            <person name="Miner T.L."/>
            <person name="Nash W.E."/>
            <person name="Kremitzki C."/>
            <person name="Oddy L."/>
            <person name="Du H."/>
            <person name="Sun H."/>
            <person name="Bradshaw-Cordum H."/>
            <person name="Ali J."/>
            <person name="Carter J."/>
            <person name="Cordes M."/>
            <person name="Harris A."/>
            <person name="Isak A."/>
            <person name="van Brunt A."/>
            <person name="Nguyen C."/>
            <person name="Du F."/>
            <person name="Courtney L."/>
            <person name="Kalicki J."/>
            <person name="Ozersky P."/>
            <person name="Abbott S."/>
            <person name="Armstrong J."/>
            <person name="Belter E.A."/>
            <person name="Caruso L."/>
            <person name="Cedroni M."/>
            <person name="Cotton M."/>
            <person name="Davidson T."/>
            <person name="Desai A."/>
            <person name="Elliott G."/>
            <person name="Erb T."/>
            <person name="Fronick C."/>
            <person name="Gaige T."/>
            <person name="Haakenson W."/>
            <person name="Haglund K."/>
            <person name="Holmes A."/>
            <person name="Harkins R."/>
            <person name="Kim K."/>
            <person name="Kruchowski S.S."/>
            <person name="Strong C.M."/>
            <person name="Grewal N."/>
            <person name="Goyea E."/>
            <person name="Hou S."/>
            <person name="Levy A."/>
            <person name="Martinka S."/>
            <person name="Mead K."/>
            <person name="McLellan M.D."/>
            <person name="Meyer R."/>
            <person name="Randall-Maher J."/>
            <person name="Tomlinson C."/>
            <person name="Dauphin-Kohlberg S."/>
            <person name="Kozlowicz-Reilly A."/>
            <person name="Shah N."/>
            <person name="Swearengen-Shahid S."/>
            <person name="Snider J."/>
            <person name="Strong J.T."/>
            <person name="Thompson J."/>
            <person name="Yoakum M."/>
            <person name="Leonard S."/>
            <person name="Pearman C."/>
            <person name="Trani L."/>
            <person name="Radionenko M."/>
            <person name="Waligorski J.E."/>
            <person name="Wang C."/>
            <person name="Rock S.M."/>
            <person name="Tin-Wollam A.-M."/>
            <person name="Maupin R."/>
            <person name="Latreille P."/>
            <person name="Wendl M.C."/>
            <person name="Yang S.-P."/>
            <person name="Pohl C."/>
            <person name="Wallis J.W."/>
            <person name="Spieth J."/>
            <person name="Bieri T.A."/>
            <person name="Berkowicz N."/>
            <person name="Nelson J.O."/>
            <person name="Osborne J."/>
            <person name="Ding L."/>
            <person name="Meyer R."/>
            <person name="Sabo A."/>
            <person name="Shotland Y."/>
            <person name="Sinha P."/>
            <person name="Wohldmann P.E."/>
            <person name="Cook L.L."/>
            <person name="Hickenbotham M.T."/>
            <person name="Eldred J."/>
            <person name="Williams D."/>
            <person name="Jones T.A."/>
            <person name="She X."/>
            <person name="Ciccarelli F.D."/>
            <person name="Izaurralde E."/>
            <person name="Taylor J."/>
            <person name="Schmutz J."/>
            <person name="Myers R.M."/>
            <person name="Cox D.R."/>
            <person name="Huang X."/>
            <person name="McPherson J.D."/>
            <person name="Mardis E.R."/>
            <person name="Clifton S.W."/>
            <person name="Warren W.C."/>
            <person name="Chinwalla A.T."/>
            <person name="Eddy S.R."/>
            <person name="Marra M.A."/>
            <person name="Ovcharenko I."/>
            <person name="Furey T.S."/>
            <person name="Miller W."/>
            <person name="Eichler E.E."/>
            <person name="Bork P."/>
            <person name="Suyama M."/>
            <person name="Torrents D."/>
            <person name="Waterston R.H."/>
            <person name="Wilson R.K."/>
        </authorList>
    </citation>
    <scope>NUCLEOTIDE SEQUENCE [LARGE SCALE GENOMIC DNA]</scope>
</reference>
<reference key="5">
    <citation type="journal article" date="2006" name="Gynecol. Oncol.">
        <title>Serine proteases HTRA1 and HTRA3 are down-regulated with increasing grades of human endometrial cancer.</title>
        <authorList>
            <person name="Bowden M.A."/>
            <person name="Di Nezza-Cossens L.A."/>
            <person name="Jobling T."/>
            <person name="Salamonsen L.A."/>
            <person name="Nie G."/>
        </authorList>
    </citation>
    <scope>INDUCTION</scope>
    <scope>TISSUE SPECIFICITY</scope>
</reference>
<reference key="6">
    <citation type="journal article" date="2009" name="Oncol. Rep.">
        <title>Expression of human HtrA1, HtrA2, HtrA3 and TGF-beta1 genes in primary endometrial cancer.</title>
        <authorList>
            <person name="Narkiewicz J."/>
            <person name="Lapinska-Szumczyk S."/>
            <person name="Zurawa-Janicka D."/>
            <person name="Skorko-Glonek J."/>
            <person name="Emerich J."/>
            <person name="Lipinska B."/>
        </authorList>
    </citation>
    <scope>INDUCTION</scope>
</reference>
<reference key="7">
    <citation type="journal article" date="2011" name="Hum. Reprod.">
        <title>Decidual HtrA3 negatively regulates trophoblast invasion during human placentation.</title>
        <authorList>
            <person name="Singh H."/>
            <person name="Endo Y."/>
            <person name="Nie G."/>
        </authorList>
    </citation>
    <scope>TISSUE SPECIFICITY</scope>
    <scope>SUBCELLULAR LOCATION</scope>
    <scope>POSSIBLE FUNCTION</scope>
</reference>
<reference key="8">
    <citation type="journal article" date="2012" name="BioTechniques">
        <title>Application of the wheat-germ cell-free translation system to produce high temperature requirement A3 (HtrA3) proteases.</title>
        <authorList>
            <person name="Singh H."/>
            <person name="Makino S."/>
            <person name="Endo Y."/>
            <person name="Li Y."/>
            <person name="Stephens A.N."/>
            <person name="Nie G."/>
        </authorList>
    </citation>
    <scope>INTERACTION WITH MYH9</scope>
    <scope>MUTAGENESIS OF SER-305</scope>
    <scope>ACTIVE SITE</scope>
    <scope>FUNCTION</scope>
</reference>
<reference key="9">
    <citation type="journal article" date="2007" name="Protein Sci.">
        <title>Structural and functional analysis of the PDZ domains of human HtrA1 and HtrA3.</title>
        <authorList>
            <person name="Runyon S.T."/>
            <person name="Zhang Y."/>
            <person name="Appleton B.A."/>
            <person name="Sazinsky S.L."/>
            <person name="Wu P."/>
            <person name="Pan B."/>
            <person name="Wiesmann C."/>
            <person name="Skelton N.J."/>
            <person name="Sidhu S.S."/>
        </authorList>
    </citation>
    <scope>X-RAY CRYSTALLOGRAPHY (1.7 ANGSTROMS) OF 354-453 IN COMPLEX WITH SYNTHETIC PEPTIDES</scope>
</reference>
<reference key="10">
    <citation type="journal article" date="2015" name="PLoS ONE">
        <title>Structural and functional analysis of human HtrA3 protease and its subdomains.</title>
        <authorList>
            <person name="Glaza P."/>
            <person name="Osipiuk J."/>
            <person name="Wenta T."/>
            <person name="Zurawa-Janicka D."/>
            <person name="Jarzab M."/>
            <person name="Lesner A."/>
            <person name="Banecki B."/>
            <person name="Skorko-Glonek J."/>
            <person name="Joachimiak A."/>
            <person name="Lipinska B."/>
        </authorList>
    </citation>
    <scope>X-RAY CRYSTALLOGRAPHY (3.27 ANGSTROMS) OF 130-453</scope>
    <scope>SUBUNIT</scope>
    <scope>ACTIVE SITE</scope>
</reference>
<dbReference type="EC" id="3.4.21.-"/>
<dbReference type="EMBL" id="AY280665">
    <property type="protein sequence ID" value="AAP42282.1"/>
    <property type="molecule type" value="mRNA"/>
</dbReference>
<dbReference type="EMBL" id="AY280666">
    <property type="protein sequence ID" value="AAP42283.1"/>
    <property type="molecule type" value="mRNA"/>
</dbReference>
<dbReference type="EMBL" id="AY040094">
    <property type="protein sequence ID" value="AAK71475.2"/>
    <property type="molecule type" value="mRNA"/>
</dbReference>
<dbReference type="EMBL" id="AC113611">
    <property type="status" value="NOT_ANNOTATED_CDS"/>
    <property type="molecule type" value="Genomic_DNA"/>
</dbReference>
<dbReference type="EMBL" id="BC034390">
    <property type="protein sequence ID" value="AAH34390.1"/>
    <property type="molecule type" value="mRNA"/>
</dbReference>
<dbReference type="EMBL" id="BC035717">
    <property type="protein sequence ID" value="AAH35717.1"/>
    <property type="molecule type" value="mRNA"/>
</dbReference>
<dbReference type="CCDS" id="CCDS3400.1">
    <molecule id="P83110-1"/>
</dbReference>
<dbReference type="CCDS" id="CCDS75105.1">
    <molecule id="P83110-2"/>
</dbReference>
<dbReference type="RefSeq" id="NP_001284488.1">
    <molecule id="P83110-2"/>
    <property type="nucleotide sequence ID" value="NM_001297559.3"/>
</dbReference>
<dbReference type="RefSeq" id="NP_444272.1">
    <molecule id="P83110-1"/>
    <property type="nucleotide sequence ID" value="NM_053044.5"/>
</dbReference>
<dbReference type="PDB" id="2P3W">
    <property type="method" value="X-ray"/>
    <property type="resolution" value="1.70 A"/>
    <property type="chains" value="A/B=354-453"/>
</dbReference>
<dbReference type="PDB" id="4RI0">
    <property type="method" value="X-ray"/>
    <property type="resolution" value="3.27 A"/>
    <property type="chains" value="A/B/C=130-453"/>
</dbReference>
<dbReference type="PDBsum" id="2P3W"/>
<dbReference type="PDBsum" id="4RI0"/>
<dbReference type="SMR" id="P83110"/>
<dbReference type="BioGRID" id="125099">
    <property type="interactions" value="30"/>
</dbReference>
<dbReference type="FunCoup" id="P83110">
    <property type="interactions" value="87"/>
</dbReference>
<dbReference type="IntAct" id="P83110">
    <property type="interactions" value="36"/>
</dbReference>
<dbReference type="STRING" id="9606.ENSP00000303766"/>
<dbReference type="BindingDB" id="P83110"/>
<dbReference type="MEROPS" id="S01.284"/>
<dbReference type="iPTMnet" id="P83110"/>
<dbReference type="PhosphoSitePlus" id="P83110"/>
<dbReference type="BioMuta" id="HTRA3"/>
<dbReference type="DMDM" id="21542412"/>
<dbReference type="jPOST" id="P83110"/>
<dbReference type="MassIVE" id="P83110"/>
<dbReference type="PaxDb" id="9606-ENSP00000303766"/>
<dbReference type="PeptideAtlas" id="P83110"/>
<dbReference type="ProteomicsDB" id="57731">
    <molecule id="P83110-1"/>
</dbReference>
<dbReference type="ProteomicsDB" id="57732">
    <molecule id="P83110-2"/>
</dbReference>
<dbReference type="Pumba" id="P83110"/>
<dbReference type="Antibodypedia" id="9597">
    <property type="antibodies" value="109 antibodies from 26 providers"/>
</dbReference>
<dbReference type="DNASU" id="94031"/>
<dbReference type="Ensembl" id="ENST00000307358.7">
    <molecule id="P83110-1"/>
    <property type="protein sequence ID" value="ENSP00000303766.2"/>
    <property type="gene ID" value="ENSG00000170801.10"/>
</dbReference>
<dbReference type="Ensembl" id="ENST00000382512.3">
    <molecule id="P83110-2"/>
    <property type="protein sequence ID" value="ENSP00000371952.3"/>
    <property type="gene ID" value="ENSG00000170801.10"/>
</dbReference>
<dbReference type="GeneID" id="94031"/>
<dbReference type="KEGG" id="hsa:94031"/>
<dbReference type="MANE-Select" id="ENST00000307358.7">
    <property type="protein sequence ID" value="ENSP00000303766.2"/>
    <property type="RefSeq nucleotide sequence ID" value="NM_053044.5"/>
    <property type="RefSeq protein sequence ID" value="NP_444272.1"/>
</dbReference>
<dbReference type="UCSC" id="uc003gkz.4">
    <molecule id="P83110-1"/>
    <property type="organism name" value="human"/>
</dbReference>
<dbReference type="AGR" id="HGNC:30406"/>
<dbReference type="CTD" id="94031"/>
<dbReference type="DisGeNET" id="94031"/>
<dbReference type="GeneCards" id="HTRA3"/>
<dbReference type="HGNC" id="HGNC:30406">
    <property type="gene designation" value="HTRA3"/>
</dbReference>
<dbReference type="HPA" id="ENSG00000170801">
    <property type="expression patterns" value="Tissue enhanced (heart)"/>
</dbReference>
<dbReference type="MIM" id="608785">
    <property type="type" value="gene"/>
</dbReference>
<dbReference type="neXtProt" id="NX_P83110"/>
<dbReference type="OpenTargets" id="ENSG00000170801"/>
<dbReference type="PharmGKB" id="PA134908281"/>
<dbReference type="VEuPathDB" id="HostDB:ENSG00000170801"/>
<dbReference type="eggNOG" id="ENOG502QT3F">
    <property type="taxonomic scope" value="Eukaryota"/>
</dbReference>
<dbReference type="GeneTree" id="ENSGT00940000159570"/>
<dbReference type="HOGENOM" id="CLU_020120_6_2_1"/>
<dbReference type="InParanoid" id="P83110"/>
<dbReference type="OMA" id="YDAKAYK"/>
<dbReference type="OrthoDB" id="4217619at2759"/>
<dbReference type="PAN-GO" id="P83110">
    <property type="GO annotations" value="2 GO annotations based on evolutionary models"/>
</dbReference>
<dbReference type="PhylomeDB" id="P83110"/>
<dbReference type="TreeFam" id="TF323480"/>
<dbReference type="BRENDA" id="3.4.21.108">
    <property type="organism ID" value="2681"/>
</dbReference>
<dbReference type="PathwayCommons" id="P83110"/>
<dbReference type="SignaLink" id="P83110"/>
<dbReference type="BioGRID-ORCS" id="94031">
    <property type="hits" value="14 hits in 1148 CRISPR screens"/>
</dbReference>
<dbReference type="EvolutionaryTrace" id="P83110"/>
<dbReference type="GenomeRNAi" id="94031"/>
<dbReference type="Pharos" id="P83110">
    <property type="development level" value="Tbio"/>
</dbReference>
<dbReference type="PRO" id="PR:P83110"/>
<dbReference type="Proteomes" id="UP000005640">
    <property type="component" value="Chromosome 4"/>
</dbReference>
<dbReference type="RNAct" id="P83110">
    <property type="molecule type" value="protein"/>
</dbReference>
<dbReference type="Bgee" id="ENSG00000170801">
    <property type="expression patterns" value="Expressed in apex of heart and 162 other cell types or tissues"/>
</dbReference>
<dbReference type="GO" id="GO:0005576">
    <property type="term" value="C:extracellular region"/>
    <property type="evidence" value="ECO:0007669"/>
    <property type="project" value="UniProtKB-SubCell"/>
</dbReference>
<dbReference type="GO" id="GO:0004175">
    <property type="term" value="F:endopeptidase activity"/>
    <property type="evidence" value="ECO:0000314"/>
    <property type="project" value="BHF-UCL"/>
</dbReference>
<dbReference type="GO" id="GO:0042802">
    <property type="term" value="F:identical protein binding"/>
    <property type="evidence" value="ECO:0000353"/>
    <property type="project" value="IntAct"/>
</dbReference>
<dbReference type="GO" id="GO:0004252">
    <property type="term" value="F:serine-type endopeptidase activity"/>
    <property type="evidence" value="ECO:0000318"/>
    <property type="project" value="GO_Central"/>
</dbReference>
<dbReference type="GO" id="GO:0008236">
    <property type="term" value="F:serine-type peptidase activity"/>
    <property type="evidence" value="ECO:0000314"/>
    <property type="project" value="UniProtKB"/>
</dbReference>
<dbReference type="GO" id="GO:0030514">
    <property type="term" value="P:negative regulation of BMP signaling pathway"/>
    <property type="evidence" value="ECO:0000250"/>
    <property type="project" value="UniProtKB"/>
</dbReference>
<dbReference type="GO" id="GO:0030512">
    <property type="term" value="P:negative regulation of transforming growth factor beta receptor signaling pathway"/>
    <property type="evidence" value="ECO:0000250"/>
    <property type="project" value="UniProtKB"/>
</dbReference>
<dbReference type="GO" id="GO:0006508">
    <property type="term" value="P:proteolysis"/>
    <property type="evidence" value="ECO:0000314"/>
    <property type="project" value="UniProtKB"/>
</dbReference>
<dbReference type="CDD" id="cd06785">
    <property type="entry name" value="cpPDZ_HtrA-like"/>
    <property type="match status" value="1"/>
</dbReference>
<dbReference type="CDD" id="cd00104">
    <property type="entry name" value="KAZAL_FS"/>
    <property type="match status" value="1"/>
</dbReference>
<dbReference type="FunFam" id="2.40.10.120:FF:000002">
    <property type="entry name" value="HtrA serine peptidase 3"/>
    <property type="match status" value="1"/>
</dbReference>
<dbReference type="FunFam" id="4.10.40.20:FF:000004">
    <property type="entry name" value="HtrA serine peptidase 3"/>
    <property type="match status" value="1"/>
</dbReference>
<dbReference type="FunFam" id="2.30.42.10:FF:000181">
    <property type="entry name" value="Putative serine protease HTRA3"/>
    <property type="match status" value="1"/>
</dbReference>
<dbReference type="Gene3D" id="2.30.42.10">
    <property type="match status" value="1"/>
</dbReference>
<dbReference type="Gene3D" id="2.40.10.120">
    <property type="match status" value="1"/>
</dbReference>
<dbReference type="Gene3D" id="3.30.60.30">
    <property type="match status" value="1"/>
</dbReference>
<dbReference type="Gene3D" id="4.10.40.20">
    <property type="match status" value="1"/>
</dbReference>
<dbReference type="InterPro" id="IPR009030">
    <property type="entry name" value="Growth_fac_rcpt_cys_sf"/>
</dbReference>
<dbReference type="InterPro" id="IPR000867">
    <property type="entry name" value="IGFBP-like"/>
</dbReference>
<dbReference type="InterPro" id="IPR002350">
    <property type="entry name" value="Kazal_dom"/>
</dbReference>
<dbReference type="InterPro" id="IPR036058">
    <property type="entry name" value="Kazal_dom_sf"/>
</dbReference>
<dbReference type="InterPro" id="IPR001478">
    <property type="entry name" value="PDZ"/>
</dbReference>
<dbReference type="InterPro" id="IPR036034">
    <property type="entry name" value="PDZ_sf"/>
</dbReference>
<dbReference type="InterPro" id="IPR009003">
    <property type="entry name" value="Peptidase_S1_PA"/>
</dbReference>
<dbReference type="InterPro" id="IPR001940">
    <property type="entry name" value="Peptidase_S1C"/>
</dbReference>
<dbReference type="PANTHER" id="PTHR22939">
    <property type="entry name" value="SERINE PROTEASE FAMILY S1C HTRA-RELATED"/>
    <property type="match status" value="1"/>
</dbReference>
<dbReference type="PANTHER" id="PTHR22939:SF14">
    <property type="entry name" value="SERINE PROTEASE HTRA3"/>
    <property type="match status" value="1"/>
</dbReference>
<dbReference type="Pfam" id="PF00219">
    <property type="entry name" value="IGFBP"/>
    <property type="match status" value="1"/>
</dbReference>
<dbReference type="Pfam" id="PF07648">
    <property type="entry name" value="Kazal_2"/>
    <property type="match status" value="1"/>
</dbReference>
<dbReference type="Pfam" id="PF13180">
    <property type="entry name" value="PDZ_2"/>
    <property type="match status" value="1"/>
</dbReference>
<dbReference type="Pfam" id="PF13365">
    <property type="entry name" value="Trypsin_2"/>
    <property type="match status" value="1"/>
</dbReference>
<dbReference type="PRINTS" id="PR00834">
    <property type="entry name" value="PROTEASES2C"/>
</dbReference>
<dbReference type="SMART" id="SM00121">
    <property type="entry name" value="IB"/>
    <property type="match status" value="1"/>
</dbReference>
<dbReference type="SMART" id="SM00280">
    <property type="entry name" value="KAZAL"/>
    <property type="match status" value="1"/>
</dbReference>
<dbReference type="SMART" id="SM00228">
    <property type="entry name" value="PDZ"/>
    <property type="match status" value="1"/>
</dbReference>
<dbReference type="SUPFAM" id="SSF57184">
    <property type="entry name" value="Growth factor receptor domain"/>
    <property type="match status" value="1"/>
</dbReference>
<dbReference type="SUPFAM" id="SSF100895">
    <property type="entry name" value="Kazal-type serine protease inhibitors"/>
    <property type="match status" value="1"/>
</dbReference>
<dbReference type="SUPFAM" id="SSF50156">
    <property type="entry name" value="PDZ domain-like"/>
    <property type="match status" value="1"/>
</dbReference>
<dbReference type="SUPFAM" id="SSF50494">
    <property type="entry name" value="Trypsin-like serine proteases"/>
    <property type="match status" value="1"/>
</dbReference>
<dbReference type="PROSITE" id="PS51323">
    <property type="entry name" value="IGFBP_N_2"/>
    <property type="match status" value="1"/>
</dbReference>
<dbReference type="PROSITE" id="PS51465">
    <property type="entry name" value="KAZAL_2"/>
    <property type="match status" value="1"/>
</dbReference>
<dbReference type="PROSITE" id="PS50106">
    <property type="entry name" value="PDZ"/>
    <property type="match status" value="1"/>
</dbReference>
<comment type="function">
    <text evidence="1 10 11">Serine protease that cleaves beta-casein/CSN2 as well as several extracellular matrix (ECM) proteoglycans such as decorin/DCN, biglycan/BGN and fibronectin/FN1. Inhibits signaling mediated by TGF-beta family proteins possibly indirectly by degradation of these ECM proteoglycans (By similarity). May act as a tumor suppressor. Negatively regulates, in vitro, trophoblast invasion during placental development and may be involved in the development of the placenta in vivo. May also have a role in ovarian development, granulosa cell differentiation and luteinization (PubMed:21321049, PubMed:22229724).</text>
</comment>
<comment type="subunit">
    <text evidence="1 8 11 12">Homotrimer (PubMed:26110759). Interacts with TGFB1; the interaction inhibits TGFB-mediated signaling. Interacts with BMP4; the interaction inhibits BMP4-mediated signaling. Interacts with TGFB2 and GDF5 (By similarity). Interacts with MYH9.</text>
</comment>
<comment type="interaction">
    <interactant intactId="EBI-2867394">
        <id>P83110</id>
    </interactant>
    <interactant intactId="EBI-353944">
        <id>P60709</id>
        <label>ACTB</label>
    </interactant>
    <organismsDiffer>false</organismsDiffer>
    <experiments>5</experiments>
</comment>
<comment type="interaction">
    <interactant intactId="EBI-2867394">
        <id>P83110</id>
    </interactant>
    <interactant intactId="EBI-2867394">
        <id>P83110</id>
        <label>HTRA3</label>
    </interactant>
    <organismsDiffer>false</organismsDiffer>
    <experiments>3</experiments>
</comment>
<comment type="interaction">
    <interactant intactId="EBI-2867394">
        <id>P83110</id>
    </interactant>
    <interactant intactId="EBI-21776319">
        <id>P83105</id>
        <label>HTRA4</label>
    </interactant>
    <organismsDiffer>false</organismsDiffer>
    <experiments>5</experiments>
</comment>
<comment type="interaction">
    <interactant intactId="EBI-2867394">
        <id>P83110</id>
    </interactant>
    <interactant intactId="EBI-356553">
        <id>P17987</id>
        <label>TCP1</label>
    </interactant>
    <organismsDiffer>false</organismsDiffer>
    <experiments>5</experiments>
</comment>
<comment type="interaction">
    <interactant intactId="EBI-2867394">
        <id>P83110</id>
    </interactant>
    <interactant intactId="EBI-517127">
        <id>P98170</id>
        <label>XIAP</label>
    </interactant>
    <organismsDiffer>false</organismsDiffer>
    <experiments>8</experiments>
</comment>
<comment type="interaction">
    <interactant intactId="EBI-2867394">
        <id>P83110</id>
    </interactant>
    <interactant intactId="EBI-5260183">
        <id>P02666</id>
        <label>CSN2</label>
    </interactant>
    <organismsDiffer>true</organismsDiffer>
    <experiments>8</experiments>
</comment>
<comment type="interaction">
    <interactant intactId="EBI-25469082">
        <id>P83110-1</id>
    </interactant>
    <interactant intactId="EBI-25469082">
        <id>P83110-1</id>
        <label>HTRA3</label>
    </interactant>
    <organismsDiffer>false</organismsDiffer>
    <experiments>2</experiments>
</comment>
<comment type="interaction">
    <interactant intactId="EBI-25469082">
        <id>P83110-1</id>
    </interactant>
    <interactant intactId="EBI-356553">
        <id>P17987</id>
        <label>TCP1</label>
    </interactant>
    <organismsDiffer>false</organismsDiffer>
    <experiments>6</experiments>
</comment>
<comment type="interaction">
    <interactant intactId="EBI-25469082">
        <id>P83110-1</id>
    </interactant>
    <interactant intactId="EBI-353844">
        <id>P08670</id>
        <label>VIM</label>
    </interactant>
    <organismsDiffer>false</organismsDiffer>
    <experiments>4</experiments>
</comment>
<comment type="interaction">
    <interactant intactId="EBI-25469082">
        <id>P83110-1</id>
    </interactant>
    <interactant intactId="EBI-517127">
        <id>P98170</id>
        <label>XIAP</label>
    </interactant>
    <organismsDiffer>false</organismsDiffer>
    <experiments>7</experiments>
</comment>
<comment type="interaction">
    <interactant intactId="EBI-22017714">
        <id>P83110-2</id>
    </interactant>
    <interactant intactId="EBI-356553">
        <id>P17987</id>
        <label>TCP1</label>
    </interactant>
    <organismsDiffer>false</organismsDiffer>
    <experiments>7</experiments>
</comment>
<comment type="interaction">
    <interactant intactId="EBI-22017714">
        <id>P83110-2</id>
    </interactant>
    <interactant intactId="EBI-353844">
        <id>P08670</id>
        <label>VIM</label>
    </interactant>
    <organismsDiffer>false</organismsDiffer>
    <experiments>5</experiments>
</comment>
<comment type="interaction">
    <interactant intactId="EBI-22017714">
        <id>P83110-2</id>
    </interactant>
    <interactant intactId="EBI-517127">
        <id>P98170</id>
        <label>XIAP</label>
    </interactant>
    <organismsDiffer>false</organismsDiffer>
    <experiments>6</experiments>
</comment>
<comment type="subcellular location">
    <subcellularLocation>
        <location evidence="10">Secreted</location>
    </subcellularLocation>
    <text>Secretion increased during decidualization of endometrial stromal cells.</text>
</comment>
<comment type="alternative products">
    <event type="alternative splicing"/>
    <isoform>
        <id>P83110-1</id>
        <name>1</name>
        <name>Long</name>
        <name>pL</name>
        <sequence type="displayed"/>
    </isoform>
    <isoform>
        <id>P83110-2</id>
        <name>2</name>
        <name>Short</name>
        <name>pS</name>
        <sequence type="described" ref="VSP_012570 VSP_012571"/>
    </isoform>
</comment>
<comment type="tissue specificity">
    <text evidence="6 7 10">Widely expressed, with highest levels in both adult and fetal heart, ovary, uterus placenta, and bladder. In the endometrium, expressed in epithelial glands and the stroma. Also present in leukocytes. Isoform 1 is predominant in heart and skeletal muscle, whereas isoform 2 is predominant in placenta and kidney.</text>
</comment>
<comment type="induction">
    <text evidence="7 9">Down-regulated in ovarian and endometrial cancers (EC). Decrease of 3.2-fold in endometrial cancer.</text>
</comment>
<comment type="similarity">
    <text evidence="14">Belongs to the peptidase S1C family.</text>
</comment>
<comment type="online information" name="Atlas of Genetics and Cytogenetics in Oncology and Haematology">
    <link uri="https://atlasgeneticsoncology.org/gene/45757/HTRA3"/>
</comment>
<protein>
    <recommendedName>
        <fullName>Serine protease HTRA3</fullName>
        <ecNumber>3.4.21.-</ecNumber>
    </recommendedName>
    <alternativeName>
        <fullName>High-temperature requirement factor A3</fullName>
    </alternativeName>
    <alternativeName>
        <fullName>Pregnancy-related serine protease</fullName>
    </alternativeName>
</protein>
<feature type="signal peptide" evidence="2">
    <location>
        <begin position="1"/>
        <end position="17"/>
    </location>
</feature>
<feature type="chain" id="PRO_0000026949" description="Serine protease HTRA3">
    <location>
        <begin position="18"/>
        <end position="453"/>
    </location>
</feature>
<feature type="domain" description="IGFBP N-terminal" evidence="4">
    <location>
        <begin position="21"/>
        <end position="84"/>
    </location>
</feature>
<feature type="domain" description="Kazal-like" evidence="5">
    <location>
        <begin position="64"/>
        <end position="128"/>
    </location>
</feature>
<feature type="domain" description="PDZ" evidence="3">
    <location>
        <begin position="359"/>
        <end position="444"/>
    </location>
</feature>
<feature type="region of interest" description="Serine protease">
    <location>
        <begin position="175"/>
        <end position="340"/>
    </location>
</feature>
<feature type="active site" description="Charge relay system" evidence="12">
    <location>
        <position position="191"/>
    </location>
</feature>
<feature type="active site" description="Charge relay system" evidence="12">
    <location>
        <position position="227"/>
    </location>
</feature>
<feature type="active site" description="Charge relay system" evidence="11 12">
    <location>
        <position position="305"/>
    </location>
</feature>
<feature type="disulfide bond" evidence="4">
    <location>
        <begin position="25"/>
        <end position="48"/>
    </location>
</feature>
<feature type="disulfide bond" evidence="4">
    <location>
        <begin position="29"/>
        <end position="50"/>
    </location>
</feature>
<feature type="disulfide bond" evidence="4">
    <location>
        <begin position="34"/>
        <end position="51"/>
    </location>
</feature>
<feature type="disulfide bond" evidence="4">
    <location>
        <begin position="39"/>
        <end position="54"/>
    </location>
</feature>
<feature type="disulfide bond" evidence="4">
    <location>
        <begin position="62"/>
        <end position="76"/>
    </location>
</feature>
<feature type="disulfide bond" evidence="4">
    <location>
        <begin position="70"/>
        <end position="81"/>
    </location>
</feature>
<feature type="disulfide bond" evidence="14">
    <location>
        <begin position="83"/>
        <end position="101"/>
    </location>
</feature>
<feature type="disulfide bond" evidence="5">
    <location>
        <begin position="90"/>
        <end position="126"/>
    </location>
</feature>
<feature type="splice variant" id="VSP_012570" description="In isoform 2." evidence="13">
    <original>DWKKRFI</original>
    <variation>APSLAVH</variation>
    <location>
        <begin position="351"/>
        <end position="357"/>
    </location>
</feature>
<feature type="splice variant" id="VSP_012571" description="In isoform 2." evidence="13">
    <location>
        <begin position="358"/>
        <end position="453"/>
    </location>
</feature>
<feature type="mutagenesis site" description="Abolishes protease activity. Stabilizes the protein." evidence="11">
    <original>S</original>
    <variation>A</variation>
    <location>
        <position position="305"/>
    </location>
</feature>
<feature type="helix" evidence="16">
    <location>
        <begin position="136"/>
        <end position="139"/>
    </location>
</feature>
<feature type="helix" evidence="16">
    <location>
        <begin position="142"/>
        <end position="150"/>
    </location>
</feature>
<feature type="helix" evidence="16">
    <location>
        <begin position="151"/>
        <end position="153"/>
    </location>
</feature>
<feature type="strand" evidence="16">
    <location>
        <begin position="154"/>
        <end position="161"/>
    </location>
</feature>
<feature type="strand" evidence="16">
    <location>
        <begin position="166"/>
        <end position="168"/>
    </location>
</feature>
<feature type="strand" evidence="16">
    <location>
        <begin position="171"/>
        <end position="181"/>
    </location>
</feature>
<feature type="turn" evidence="16">
    <location>
        <begin position="182"/>
        <end position="184"/>
    </location>
</feature>
<feature type="strand" evidence="16">
    <location>
        <begin position="185"/>
        <end position="188"/>
    </location>
</feature>
<feature type="turn" evidence="16">
    <location>
        <begin position="190"/>
        <end position="193"/>
    </location>
</feature>
<feature type="strand" evidence="16">
    <location>
        <begin position="203"/>
        <end position="208"/>
    </location>
</feature>
<feature type="strand" evidence="16">
    <location>
        <begin position="214"/>
        <end position="223"/>
    </location>
</feature>
<feature type="turn" evidence="16">
    <location>
        <begin position="224"/>
        <end position="227"/>
    </location>
</feature>
<feature type="strand" evidence="16">
    <location>
        <begin position="228"/>
        <end position="233"/>
    </location>
</feature>
<feature type="helix" evidence="16">
    <location>
        <begin position="247"/>
        <end position="249"/>
    </location>
</feature>
<feature type="strand" evidence="16">
    <location>
        <begin position="255"/>
        <end position="260"/>
    </location>
</feature>
<feature type="strand" evidence="16">
    <location>
        <begin position="268"/>
        <end position="274"/>
    </location>
</feature>
<feature type="strand" evidence="16">
    <location>
        <begin position="294"/>
        <end position="298"/>
    </location>
</feature>
<feature type="turn" evidence="16">
    <location>
        <begin position="302"/>
        <end position="306"/>
    </location>
</feature>
<feature type="strand" evidence="16">
    <location>
        <begin position="307"/>
        <end position="310"/>
    </location>
</feature>
<feature type="strand" evidence="16">
    <location>
        <begin position="316"/>
        <end position="325"/>
    </location>
</feature>
<feature type="strand" evidence="16">
    <location>
        <begin position="328"/>
        <end position="333"/>
    </location>
</feature>
<feature type="helix" evidence="16">
    <location>
        <begin position="334"/>
        <end position="342"/>
    </location>
</feature>
<feature type="strand" evidence="15">
    <location>
        <begin position="354"/>
        <end position="356"/>
    </location>
</feature>
<feature type="strand" evidence="15">
    <location>
        <begin position="359"/>
        <end position="363"/>
    </location>
</feature>
<feature type="helix" evidence="15">
    <location>
        <begin position="366"/>
        <end position="375"/>
    </location>
</feature>
<feature type="strand" evidence="15">
    <location>
        <begin position="384"/>
        <end position="391"/>
    </location>
</feature>
<feature type="helix" evidence="15">
    <location>
        <begin position="396"/>
        <end position="400"/>
    </location>
</feature>
<feature type="strand" evidence="15">
    <location>
        <begin position="407"/>
        <end position="411"/>
    </location>
</feature>
<feature type="helix" evidence="15">
    <location>
        <begin position="419"/>
        <end position="428"/>
    </location>
</feature>
<feature type="strand" evidence="15">
    <location>
        <begin position="430"/>
        <end position="438"/>
    </location>
</feature>
<feature type="strand" evidence="15">
    <location>
        <begin position="441"/>
        <end position="447"/>
    </location>
</feature>
<feature type="strand" evidence="15">
    <location>
        <begin position="450"/>
        <end position="452"/>
    </location>
</feature>
<organism>
    <name type="scientific">Homo sapiens</name>
    <name type="common">Human</name>
    <dbReference type="NCBI Taxonomy" id="9606"/>
    <lineage>
        <taxon>Eukaryota</taxon>
        <taxon>Metazoa</taxon>
        <taxon>Chordata</taxon>
        <taxon>Craniata</taxon>
        <taxon>Vertebrata</taxon>
        <taxon>Euteleostomi</taxon>
        <taxon>Mammalia</taxon>
        <taxon>Eutheria</taxon>
        <taxon>Euarchontoglires</taxon>
        <taxon>Primates</taxon>
        <taxon>Haplorrhini</taxon>
        <taxon>Catarrhini</taxon>
        <taxon>Hominidae</taxon>
        <taxon>Homo</taxon>
    </lineage>
</organism>
<gene>
    <name type="primary">HTRA3</name>
    <name type="synonym">PRSP</name>
</gene>
<sequence>MQARALLLAALAALALAREPPAAPCPARCDVSRCPSPRCPGGYVPDLCNCCLVCAASEGEPCGGPLDSPCGESLECVRGLCRCRWSHAVCGTDGHTYANVCALQAASRRALQLSGTPVRQLQKGACPLGLHQLSSPRYKFNFIADVVEKIAPAVVHIELFLRHPLFGRNVPLSSGSGFIMSEAGLIITNAHVVSSNSAAPGRQQLKVQLQNGDSYEATIKDIDKKSDIATIKIHPKKKLPVLLLGHSADLRPGEFVVAIGSPFALQNTVTTGIVSTAQREGRELGLRDSDMDYIQTDAIINYGNSGGPLVNLDGEVIGINTLKVTAGISFAIPSDRITRFLTEFQDKQIKDWKKRFIGIRMRTITPSLVDELKASNPDFPEVSSGIYVQEVAPNSPSQRGGIQDGDIIVKVNGRPLVDSSELQEAVLTESPLLLEVRRGNDDLLFSIAPEVVM</sequence>
<keyword id="KW-0002">3D-structure</keyword>
<keyword id="KW-0025">Alternative splicing</keyword>
<keyword id="KW-1015">Disulfide bond</keyword>
<keyword id="KW-0378">Hydrolase</keyword>
<keyword id="KW-0645">Protease</keyword>
<keyword id="KW-1267">Proteomics identification</keyword>
<keyword id="KW-1185">Reference proteome</keyword>
<keyword id="KW-0964">Secreted</keyword>
<keyword id="KW-0720">Serine protease</keyword>
<keyword id="KW-0732">Signal</keyword>
<name>HTRA3_HUMAN</name>
<accession>P83110</accession>
<accession>Q7Z7A2</accession>